<reference key="1">
    <citation type="journal article" date="2006" name="J. Bacteriol.">
        <title>The genome sequence of the obligately chemolithoautotrophic, facultatively anaerobic bacterium Thiobacillus denitrificans.</title>
        <authorList>
            <person name="Beller H.R."/>
            <person name="Chain P.S."/>
            <person name="Letain T.E."/>
            <person name="Chakicherla A."/>
            <person name="Larimer F.W."/>
            <person name="Richardson P.M."/>
            <person name="Coleman M.A."/>
            <person name="Wood A.P."/>
            <person name="Kelly D.P."/>
        </authorList>
    </citation>
    <scope>NUCLEOTIDE SEQUENCE [LARGE SCALE GENOMIC DNA]</scope>
    <source>
        <strain>ATCC 25259 / T1</strain>
    </source>
</reference>
<keyword id="KW-0963">Cytoplasm</keyword>
<keyword id="KW-0324">Glycolysis</keyword>
<keyword id="KW-0456">Lyase</keyword>
<keyword id="KW-0460">Magnesium</keyword>
<keyword id="KW-0479">Metal-binding</keyword>
<keyword id="KW-1185">Reference proteome</keyword>
<keyword id="KW-0964">Secreted</keyword>
<proteinExistence type="inferred from homology"/>
<name>ENO_THIDA</name>
<protein>
    <recommendedName>
        <fullName evidence="1">Enolase</fullName>
        <ecNumber evidence="1">4.2.1.11</ecNumber>
    </recommendedName>
    <alternativeName>
        <fullName evidence="1">2-phospho-D-glycerate hydro-lyase</fullName>
    </alternativeName>
    <alternativeName>
        <fullName evidence="1">2-phosphoglycerate dehydratase</fullName>
    </alternativeName>
</protein>
<evidence type="ECO:0000255" key="1">
    <source>
        <dbReference type="HAMAP-Rule" id="MF_00318"/>
    </source>
</evidence>
<accession>Q3SL43</accession>
<dbReference type="EC" id="4.2.1.11" evidence="1"/>
<dbReference type="EMBL" id="CP000116">
    <property type="protein sequence ID" value="AAZ96574.1"/>
    <property type="molecule type" value="Genomic_DNA"/>
</dbReference>
<dbReference type="RefSeq" id="WP_011311133.1">
    <property type="nucleotide sequence ID" value="NC_007404.1"/>
</dbReference>
<dbReference type="SMR" id="Q3SL43"/>
<dbReference type="STRING" id="292415.Tbd_0621"/>
<dbReference type="KEGG" id="tbd:Tbd_0621"/>
<dbReference type="eggNOG" id="COG0148">
    <property type="taxonomic scope" value="Bacteria"/>
</dbReference>
<dbReference type="HOGENOM" id="CLU_031223_2_1_4"/>
<dbReference type="OrthoDB" id="9804716at2"/>
<dbReference type="UniPathway" id="UPA00109">
    <property type="reaction ID" value="UER00187"/>
</dbReference>
<dbReference type="Proteomes" id="UP000008291">
    <property type="component" value="Chromosome"/>
</dbReference>
<dbReference type="GO" id="GO:0009986">
    <property type="term" value="C:cell surface"/>
    <property type="evidence" value="ECO:0007669"/>
    <property type="project" value="UniProtKB-SubCell"/>
</dbReference>
<dbReference type="GO" id="GO:0005576">
    <property type="term" value="C:extracellular region"/>
    <property type="evidence" value="ECO:0007669"/>
    <property type="project" value="UniProtKB-SubCell"/>
</dbReference>
<dbReference type="GO" id="GO:0000015">
    <property type="term" value="C:phosphopyruvate hydratase complex"/>
    <property type="evidence" value="ECO:0007669"/>
    <property type="project" value="InterPro"/>
</dbReference>
<dbReference type="GO" id="GO:0000287">
    <property type="term" value="F:magnesium ion binding"/>
    <property type="evidence" value="ECO:0007669"/>
    <property type="project" value="UniProtKB-UniRule"/>
</dbReference>
<dbReference type="GO" id="GO:0004634">
    <property type="term" value="F:phosphopyruvate hydratase activity"/>
    <property type="evidence" value="ECO:0007669"/>
    <property type="project" value="UniProtKB-UniRule"/>
</dbReference>
<dbReference type="GO" id="GO:0006096">
    <property type="term" value="P:glycolytic process"/>
    <property type="evidence" value="ECO:0007669"/>
    <property type="project" value="UniProtKB-UniRule"/>
</dbReference>
<dbReference type="CDD" id="cd03313">
    <property type="entry name" value="enolase"/>
    <property type="match status" value="1"/>
</dbReference>
<dbReference type="FunFam" id="3.20.20.120:FF:000001">
    <property type="entry name" value="Enolase"/>
    <property type="match status" value="1"/>
</dbReference>
<dbReference type="FunFam" id="3.30.390.10:FF:000001">
    <property type="entry name" value="Enolase"/>
    <property type="match status" value="1"/>
</dbReference>
<dbReference type="Gene3D" id="3.20.20.120">
    <property type="entry name" value="Enolase-like C-terminal domain"/>
    <property type="match status" value="1"/>
</dbReference>
<dbReference type="Gene3D" id="3.30.390.10">
    <property type="entry name" value="Enolase-like, N-terminal domain"/>
    <property type="match status" value="1"/>
</dbReference>
<dbReference type="HAMAP" id="MF_00318">
    <property type="entry name" value="Enolase"/>
    <property type="match status" value="1"/>
</dbReference>
<dbReference type="InterPro" id="IPR000941">
    <property type="entry name" value="Enolase"/>
</dbReference>
<dbReference type="InterPro" id="IPR036849">
    <property type="entry name" value="Enolase-like_C_sf"/>
</dbReference>
<dbReference type="InterPro" id="IPR029017">
    <property type="entry name" value="Enolase-like_N"/>
</dbReference>
<dbReference type="InterPro" id="IPR020810">
    <property type="entry name" value="Enolase_C"/>
</dbReference>
<dbReference type="InterPro" id="IPR020809">
    <property type="entry name" value="Enolase_CS"/>
</dbReference>
<dbReference type="InterPro" id="IPR020811">
    <property type="entry name" value="Enolase_N"/>
</dbReference>
<dbReference type="NCBIfam" id="TIGR01060">
    <property type="entry name" value="eno"/>
    <property type="match status" value="1"/>
</dbReference>
<dbReference type="PANTHER" id="PTHR11902">
    <property type="entry name" value="ENOLASE"/>
    <property type="match status" value="1"/>
</dbReference>
<dbReference type="PANTHER" id="PTHR11902:SF1">
    <property type="entry name" value="ENOLASE"/>
    <property type="match status" value="1"/>
</dbReference>
<dbReference type="Pfam" id="PF00113">
    <property type="entry name" value="Enolase_C"/>
    <property type="match status" value="1"/>
</dbReference>
<dbReference type="Pfam" id="PF03952">
    <property type="entry name" value="Enolase_N"/>
    <property type="match status" value="1"/>
</dbReference>
<dbReference type="PIRSF" id="PIRSF001400">
    <property type="entry name" value="Enolase"/>
    <property type="match status" value="1"/>
</dbReference>
<dbReference type="PRINTS" id="PR00148">
    <property type="entry name" value="ENOLASE"/>
</dbReference>
<dbReference type="SFLD" id="SFLDF00002">
    <property type="entry name" value="enolase"/>
    <property type="match status" value="1"/>
</dbReference>
<dbReference type="SFLD" id="SFLDG00178">
    <property type="entry name" value="enolase"/>
    <property type="match status" value="1"/>
</dbReference>
<dbReference type="SMART" id="SM01192">
    <property type="entry name" value="Enolase_C"/>
    <property type="match status" value="1"/>
</dbReference>
<dbReference type="SMART" id="SM01193">
    <property type="entry name" value="Enolase_N"/>
    <property type="match status" value="1"/>
</dbReference>
<dbReference type="SUPFAM" id="SSF51604">
    <property type="entry name" value="Enolase C-terminal domain-like"/>
    <property type="match status" value="1"/>
</dbReference>
<dbReference type="SUPFAM" id="SSF54826">
    <property type="entry name" value="Enolase N-terminal domain-like"/>
    <property type="match status" value="1"/>
</dbReference>
<dbReference type="PROSITE" id="PS00164">
    <property type="entry name" value="ENOLASE"/>
    <property type="match status" value="1"/>
</dbReference>
<feature type="chain" id="PRO_0000267130" description="Enolase">
    <location>
        <begin position="1"/>
        <end position="427"/>
    </location>
</feature>
<feature type="active site" description="Proton donor" evidence="1">
    <location>
        <position position="205"/>
    </location>
</feature>
<feature type="active site" description="Proton acceptor" evidence="1">
    <location>
        <position position="337"/>
    </location>
</feature>
<feature type="binding site" evidence="1">
    <location>
        <position position="163"/>
    </location>
    <ligand>
        <name>(2R)-2-phosphoglycerate</name>
        <dbReference type="ChEBI" id="CHEBI:58289"/>
    </ligand>
</feature>
<feature type="binding site" evidence="1">
    <location>
        <position position="242"/>
    </location>
    <ligand>
        <name>Mg(2+)</name>
        <dbReference type="ChEBI" id="CHEBI:18420"/>
    </ligand>
</feature>
<feature type="binding site" evidence="1">
    <location>
        <position position="285"/>
    </location>
    <ligand>
        <name>Mg(2+)</name>
        <dbReference type="ChEBI" id="CHEBI:18420"/>
    </ligand>
</feature>
<feature type="binding site" evidence="1">
    <location>
        <position position="312"/>
    </location>
    <ligand>
        <name>Mg(2+)</name>
        <dbReference type="ChEBI" id="CHEBI:18420"/>
    </ligand>
</feature>
<feature type="binding site" evidence="1">
    <location>
        <position position="337"/>
    </location>
    <ligand>
        <name>(2R)-2-phosphoglycerate</name>
        <dbReference type="ChEBI" id="CHEBI:58289"/>
    </ligand>
</feature>
<feature type="binding site" evidence="1">
    <location>
        <position position="366"/>
    </location>
    <ligand>
        <name>(2R)-2-phosphoglycerate</name>
        <dbReference type="ChEBI" id="CHEBI:58289"/>
    </ligand>
</feature>
<feature type="binding site" evidence="1">
    <location>
        <position position="367"/>
    </location>
    <ligand>
        <name>(2R)-2-phosphoglycerate</name>
        <dbReference type="ChEBI" id="CHEBI:58289"/>
    </ligand>
</feature>
<feature type="binding site" evidence="1">
    <location>
        <position position="388"/>
    </location>
    <ligand>
        <name>(2R)-2-phosphoglycerate</name>
        <dbReference type="ChEBI" id="CHEBI:58289"/>
    </ligand>
</feature>
<comment type="function">
    <text evidence="1">Catalyzes the reversible conversion of 2-phosphoglycerate (2-PG) into phosphoenolpyruvate (PEP). It is essential for the degradation of carbohydrates via glycolysis.</text>
</comment>
<comment type="catalytic activity">
    <reaction evidence="1">
        <text>(2R)-2-phosphoglycerate = phosphoenolpyruvate + H2O</text>
        <dbReference type="Rhea" id="RHEA:10164"/>
        <dbReference type="ChEBI" id="CHEBI:15377"/>
        <dbReference type="ChEBI" id="CHEBI:58289"/>
        <dbReference type="ChEBI" id="CHEBI:58702"/>
        <dbReference type="EC" id="4.2.1.11"/>
    </reaction>
</comment>
<comment type="cofactor">
    <cofactor evidence="1">
        <name>Mg(2+)</name>
        <dbReference type="ChEBI" id="CHEBI:18420"/>
    </cofactor>
    <text evidence="1">Binds a second Mg(2+) ion via substrate during catalysis.</text>
</comment>
<comment type="pathway">
    <text evidence="1">Carbohydrate degradation; glycolysis; pyruvate from D-glyceraldehyde 3-phosphate: step 4/5.</text>
</comment>
<comment type="subcellular location">
    <subcellularLocation>
        <location evidence="1">Cytoplasm</location>
    </subcellularLocation>
    <subcellularLocation>
        <location evidence="1">Secreted</location>
    </subcellularLocation>
    <subcellularLocation>
        <location evidence="1">Cell surface</location>
    </subcellularLocation>
    <text evidence="1">Fractions of enolase are present in both the cytoplasm and on the cell surface.</text>
</comment>
<comment type="similarity">
    <text evidence="1">Belongs to the enolase family.</text>
</comment>
<organism>
    <name type="scientific">Thiobacillus denitrificans (strain ATCC 25259 / T1)</name>
    <dbReference type="NCBI Taxonomy" id="292415"/>
    <lineage>
        <taxon>Bacteria</taxon>
        <taxon>Pseudomonadati</taxon>
        <taxon>Pseudomonadota</taxon>
        <taxon>Betaproteobacteria</taxon>
        <taxon>Nitrosomonadales</taxon>
        <taxon>Thiobacillaceae</taxon>
        <taxon>Thiobacillus</taxon>
    </lineage>
</organism>
<sequence length="427" mass="45983">MSAIIDVIAREILDSRGNPTVEADVLLESGVIGRAAVPSGASTGSREAIELRDGDKSRYLGKGVLKAVEHVNTEICEAIIGLDVEDQAFIDQTMIELDGTENKSRLGANALLAVSMACARAAAEQAGLPLYRYLGGAAPMQLPVPMMNIINGGAHANNNIDMQEFMVIPVGAPSFREALRYGAEVFHALKKLLDDAGMTTTVGDEGGFAPNLESHEAALKLIVQAIEKAGLQPGIDVAIGVDCASSEFYKDGLYHIDSENLKLTSAAFTDYLAAWCDKYPIISIEDGMAEGDWDGWKILTDRLGRRVQLVGDDLFVTNAKILKEGIEKDIANSILIKVNQIGTLSETFQAIEMAKQAGYTSVISHRSGETEDTTIADLAVATNARQIKTGSLSRSDRMAKYNQLLRIEEELGDTASYPGRDAFRQRG</sequence>
<gene>
    <name evidence="1" type="primary">eno</name>
    <name type="ordered locus">Tbd_0621</name>
</gene>